<feature type="chain" id="PRO_0000390084" description="NADH-quinone oxidoreductase subunit K 2">
    <location>
        <begin position="1"/>
        <end position="100"/>
    </location>
</feature>
<feature type="transmembrane region" description="Helical" evidence="1">
    <location>
        <begin position="4"/>
        <end position="24"/>
    </location>
</feature>
<feature type="transmembrane region" description="Helical" evidence="1">
    <location>
        <begin position="29"/>
        <end position="49"/>
    </location>
</feature>
<feature type="transmembrane region" description="Helical" evidence="1">
    <location>
        <begin position="60"/>
        <end position="80"/>
    </location>
</feature>
<proteinExistence type="inferred from homology"/>
<name>NUOK2_GEOUR</name>
<reference key="1">
    <citation type="submission" date="2007-05" db="EMBL/GenBank/DDBJ databases">
        <title>Complete sequence of Geobacter uraniireducens Rf4.</title>
        <authorList>
            <consortium name="US DOE Joint Genome Institute"/>
            <person name="Copeland A."/>
            <person name="Lucas S."/>
            <person name="Lapidus A."/>
            <person name="Barry K."/>
            <person name="Detter J.C."/>
            <person name="Glavina del Rio T."/>
            <person name="Hammon N."/>
            <person name="Israni S."/>
            <person name="Dalin E."/>
            <person name="Tice H."/>
            <person name="Pitluck S."/>
            <person name="Chertkov O."/>
            <person name="Brettin T."/>
            <person name="Bruce D."/>
            <person name="Han C."/>
            <person name="Schmutz J."/>
            <person name="Larimer F."/>
            <person name="Land M."/>
            <person name="Hauser L."/>
            <person name="Kyrpides N."/>
            <person name="Mikhailova N."/>
            <person name="Shelobolina E."/>
            <person name="Aklujkar M."/>
            <person name="Lovley D."/>
            <person name="Richardson P."/>
        </authorList>
    </citation>
    <scope>NUCLEOTIDE SEQUENCE [LARGE SCALE GENOMIC DNA]</scope>
    <source>
        <strain>ATCC BAA-1134 / JCM 13001 / Rf4</strain>
    </source>
</reference>
<accession>A5G9A9</accession>
<evidence type="ECO:0000255" key="1">
    <source>
        <dbReference type="HAMAP-Rule" id="MF_01456"/>
    </source>
</evidence>
<sequence>MLALNNYLILSAILFSIGTIGVLVRRNAIVIFMCVEMMLNAVNLTFIAFSKYLGNIDGQIFVFFVMTVAAAEAAVGLALMIAFYKNRESIDVEDVNLMKW</sequence>
<keyword id="KW-0997">Cell inner membrane</keyword>
<keyword id="KW-1003">Cell membrane</keyword>
<keyword id="KW-0472">Membrane</keyword>
<keyword id="KW-0520">NAD</keyword>
<keyword id="KW-0874">Quinone</keyword>
<keyword id="KW-1185">Reference proteome</keyword>
<keyword id="KW-1278">Translocase</keyword>
<keyword id="KW-0812">Transmembrane</keyword>
<keyword id="KW-1133">Transmembrane helix</keyword>
<keyword id="KW-0813">Transport</keyword>
<keyword id="KW-0830">Ubiquinone</keyword>
<organism>
    <name type="scientific">Geotalea uraniireducens (strain Rf4)</name>
    <name type="common">Geobacter uraniireducens</name>
    <dbReference type="NCBI Taxonomy" id="351605"/>
    <lineage>
        <taxon>Bacteria</taxon>
        <taxon>Pseudomonadati</taxon>
        <taxon>Thermodesulfobacteriota</taxon>
        <taxon>Desulfuromonadia</taxon>
        <taxon>Geobacterales</taxon>
        <taxon>Geobacteraceae</taxon>
        <taxon>Geotalea</taxon>
    </lineage>
</organism>
<dbReference type="EC" id="7.1.1.-" evidence="1"/>
<dbReference type="EMBL" id="CP000698">
    <property type="protein sequence ID" value="ABQ28377.1"/>
    <property type="molecule type" value="Genomic_DNA"/>
</dbReference>
<dbReference type="RefSeq" id="WP_011941008.1">
    <property type="nucleotide sequence ID" value="NC_009483.1"/>
</dbReference>
<dbReference type="SMR" id="A5G9A9"/>
<dbReference type="STRING" id="351605.Gura_4234"/>
<dbReference type="KEGG" id="gur:Gura_4234"/>
<dbReference type="HOGENOM" id="CLU_144724_0_0_7"/>
<dbReference type="OrthoDB" id="9810120at2"/>
<dbReference type="Proteomes" id="UP000006695">
    <property type="component" value="Chromosome"/>
</dbReference>
<dbReference type="GO" id="GO:0030964">
    <property type="term" value="C:NADH dehydrogenase complex"/>
    <property type="evidence" value="ECO:0007669"/>
    <property type="project" value="TreeGrafter"/>
</dbReference>
<dbReference type="GO" id="GO:0005886">
    <property type="term" value="C:plasma membrane"/>
    <property type="evidence" value="ECO:0007669"/>
    <property type="project" value="UniProtKB-SubCell"/>
</dbReference>
<dbReference type="GO" id="GO:0050136">
    <property type="term" value="F:NADH:ubiquinone reductase (non-electrogenic) activity"/>
    <property type="evidence" value="ECO:0007669"/>
    <property type="project" value="UniProtKB-UniRule"/>
</dbReference>
<dbReference type="GO" id="GO:0048038">
    <property type="term" value="F:quinone binding"/>
    <property type="evidence" value="ECO:0007669"/>
    <property type="project" value="UniProtKB-KW"/>
</dbReference>
<dbReference type="GO" id="GO:0042773">
    <property type="term" value="P:ATP synthesis coupled electron transport"/>
    <property type="evidence" value="ECO:0007669"/>
    <property type="project" value="InterPro"/>
</dbReference>
<dbReference type="FunFam" id="1.10.287.3510:FF:000001">
    <property type="entry name" value="NADH-quinone oxidoreductase subunit K"/>
    <property type="match status" value="1"/>
</dbReference>
<dbReference type="Gene3D" id="1.10.287.3510">
    <property type="match status" value="1"/>
</dbReference>
<dbReference type="HAMAP" id="MF_01456">
    <property type="entry name" value="NDH1_NuoK"/>
    <property type="match status" value="1"/>
</dbReference>
<dbReference type="InterPro" id="IPR001133">
    <property type="entry name" value="NADH_UbQ_OxRdtase_chain4L/K"/>
</dbReference>
<dbReference type="InterPro" id="IPR039428">
    <property type="entry name" value="NUOK/Mnh_C1-like"/>
</dbReference>
<dbReference type="NCBIfam" id="NF004320">
    <property type="entry name" value="PRK05715.1-2"/>
    <property type="match status" value="1"/>
</dbReference>
<dbReference type="NCBIfam" id="NF004321">
    <property type="entry name" value="PRK05715.1-3"/>
    <property type="match status" value="1"/>
</dbReference>
<dbReference type="NCBIfam" id="NF004323">
    <property type="entry name" value="PRK05715.1-5"/>
    <property type="match status" value="1"/>
</dbReference>
<dbReference type="PANTHER" id="PTHR11434:SF21">
    <property type="entry name" value="NADH DEHYDROGENASE SUBUNIT 4L-RELATED"/>
    <property type="match status" value="1"/>
</dbReference>
<dbReference type="PANTHER" id="PTHR11434">
    <property type="entry name" value="NADH-UBIQUINONE OXIDOREDUCTASE SUBUNIT ND4L"/>
    <property type="match status" value="1"/>
</dbReference>
<dbReference type="Pfam" id="PF00420">
    <property type="entry name" value="Oxidored_q2"/>
    <property type="match status" value="1"/>
</dbReference>
<protein>
    <recommendedName>
        <fullName evidence="1">NADH-quinone oxidoreductase subunit K 2</fullName>
        <ecNumber evidence="1">7.1.1.-</ecNumber>
    </recommendedName>
    <alternativeName>
        <fullName evidence="1">NADH dehydrogenase I subunit K 2</fullName>
    </alternativeName>
    <alternativeName>
        <fullName evidence="1">NDH-1 subunit K 2</fullName>
    </alternativeName>
</protein>
<gene>
    <name evidence="1" type="primary">nuoK2</name>
    <name type="ordered locus">Gura_4234</name>
</gene>
<comment type="function">
    <text evidence="1">NDH-1 shuttles electrons from NADH, via FMN and iron-sulfur (Fe-S) centers, to quinones in the respiratory chain. The immediate electron acceptor for the enzyme in this species is believed to be ubiquinone. Couples the redox reaction to proton translocation (for every two electrons transferred, four hydrogen ions are translocated across the cytoplasmic membrane), and thus conserves the redox energy in a proton gradient.</text>
</comment>
<comment type="catalytic activity">
    <reaction evidence="1">
        <text>a quinone + NADH + 5 H(+)(in) = a quinol + NAD(+) + 4 H(+)(out)</text>
        <dbReference type="Rhea" id="RHEA:57888"/>
        <dbReference type="ChEBI" id="CHEBI:15378"/>
        <dbReference type="ChEBI" id="CHEBI:24646"/>
        <dbReference type="ChEBI" id="CHEBI:57540"/>
        <dbReference type="ChEBI" id="CHEBI:57945"/>
        <dbReference type="ChEBI" id="CHEBI:132124"/>
    </reaction>
</comment>
<comment type="subunit">
    <text evidence="1">NDH-1 is composed of 14 different subunits. Subunits NuoA, H, J, K, L, M, N constitute the membrane sector of the complex.</text>
</comment>
<comment type="subcellular location">
    <subcellularLocation>
        <location evidence="1">Cell inner membrane</location>
        <topology evidence="1">Multi-pass membrane protein</topology>
    </subcellularLocation>
</comment>
<comment type="similarity">
    <text evidence="1">Belongs to the complex I subunit 4L family.</text>
</comment>